<organism>
    <name type="scientific">Rattus norvegicus</name>
    <name type="common">Rat</name>
    <dbReference type="NCBI Taxonomy" id="10116"/>
    <lineage>
        <taxon>Eukaryota</taxon>
        <taxon>Metazoa</taxon>
        <taxon>Chordata</taxon>
        <taxon>Craniata</taxon>
        <taxon>Vertebrata</taxon>
        <taxon>Euteleostomi</taxon>
        <taxon>Mammalia</taxon>
        <taxon>Eutheria</taxon>
        <taxon>Euarchontoglires</taxon>
        <taxon>Glires</taxon>
        <taxon>Rodentia</taxon>
        <taxon>Myomorpha</taxon>
        <taxon>Muroidea</taxon>
        <taxon>Muridae</taxon>
        <taxon>Murinae</taxon>
        <taxon>Rattus</taxon>
    </lineage>
</organism>
<gene>
    <name type="primary">Fgf16</name>
</gene>
<protein>
    <recommendedName>
        <fullName>Fibroblast growth factor 16</fullName>
        <shortName>FGF-16</shortName>
    </recommendedName>
</protein>
<evidence type="ECO:0000250" key="1">
    <source>
        <dbReference type="UniProtKB" id="O43320"/>
    </source>
</evidence>
<evidence type="ECO:0000255" key="2"/>
<evidence type="ECO:0000269" key="3">
    <source>
    </source>
</evidence>
<evidence type="ECO:0000305" key="4"/>
<name>FGF16_RAT</name>
<sequence length="207" mass="23753">MAEVGGVFASLDWDLQGFSSSLGNVPLADSPGFLNERLGQIEGKLQRGSPTDFAHLKGILRRRQLYCRTGFHLEIFPNGTVHGTRHDHSRFGILEFISLAVGLISIRGVDSGLYLGMNERGELFGSKKLTRECVFREQFEENWYNTYASTLYKHSDSERQYYVALNKDGSPREGYRTKRHQKFTHFLPRPVDPSKLPSMSRDLFRYR</sequence>
<keyword id="KW-0325">Glycoprotein</keyword>
<keyword id="KW-0339">Growth factor</keyword>
<keyword id="KW-0597">Phosphoprotein</keyword>
<keyword id="KW-1185">Reference proteome</keyword>
<keyword id="KW-0964">Secreted</keyword>
<comment type="function">
    <text evidence="1 3">Plays an important role in the regulation of embryonic development, cell proliferation and cell differentiation, and is required for normal cardiomyocyte proliferation and heart development.</text>
</comment>
<comment type="subunit">
    <text evidence="1">Interacts with FGFR1 and FGFR2.</text>
</comment>
<comment type="subcellular location">
    <subcellularLocation>
        <location evidence="3">Secreted</location>
    </subcellularLocation>
</comment>
<comment type="tissue specificity">
    <text evidence="3">In adult, predominantly expressed in heart, in the cardiac myocytes. Not detected in brain, lung, liver, kidney and white adipose tissue. In embryos, predominantly expressed in the brown adipose tissue.</text>
</comment>
<comment type="developmental stage">
    <text evidence="3">Expression in brown adipose tissue decreased greatly after birth.</text>
</comment>
<comment type="similarity">
    <text evidence="4">Belongs to the heparin-binding growth factors family.</text>
</comment>
<accession>O54769</accession>
<proteinExistence type="evidence at transcript level"/>
<feature type="chain" id="PRO_0000147615" description="Fibroblast growth factor 16">
    <location>
        <begin position="1"/>
        <end position="207"/>
    </location>
</feature>
<feature type="modified residue" description="Phosphoserine" evidence="1">
    <location>
        <position position="111"/>
    </location>
</feature>
<feature type="glycosylation site" description="N-linked (GlcNAc...) asparagine" evidence="2">
    <location>
        <position position="78"/>
    </location>
</feature>
<dbReference type="EMBL" id="AB002561">
    <property type="protein sequence ID" value="BAA24947.1"/>
    <property type="molecule type" value="mRNA"/>
</dbReference>
<dbReference type="EMBL" id="BC085738">
    <property type="protein sequence ID" value="AAH85738.1"/>
    <property type="molecule type" value="mRNA"/>
</dbReference>
<dbReference type="PIR" id="JC5940">
    <property type="entry name" value="JC5940"/>
</dbReference>
<dbReference type="RefSeq" id="NP_068639.1">
    <property type="nucleotide sequence ID" value="NM_021867.4"/>
</dbReference>
<dbReference type="SMR" id="O54769"/>
<dbReference type="DIP" id="DIP-6040N"/>
<dbReference type="FunCoup" id="O54769">
    <property type="interactions" value="431"/>
</dbReference>
<dbReference type="STRING" id="10116.ENSRNOP00000071308"/>
<dbReference type="GlyCosmos" id="O54769">
    <property type="glycosylation" value="1 site, No reported glycans"/>
</dbReference>
<dbReference type="GlyGen" id="O54769">
    <property type="glycosylation" value="1 site"/>
</dbReference>
<dbReference type="PhosphoSitePlus" id="O54769"/>
<dbReference type="PaxDb" id="10116-ENSRNOP00000003463"/>
<dbReference type="Ensembl" id="ENSRNOT00000090665.2">
    <property type="protein sequence ID" value="ENSRNOP00000071308.1"/>
    <property type="gene ID" value="ENSRNOG00000061530.2"/>
</dbReference>
<dbReference type="GeneID" id="60464"/>
<dbReference type="KEGG" id="rno:60464"/>
<dbReference type="UCSC" id="RGD:71052">
    <property type="organism name" value="rat"/>
</dbReference>
<dbReference type="AGR" id="RGD:71052"/>
<dbReference type="CTD" id="8823"/>
<dbReference type="RGD" id="71052">
    <property type="gene designation" value="Fgf16"/>
</dbReference>
<dbReference type="eggNOG" id="KOG3885">
    <property type="taxonomic scope" value="Eukaryota"/>
</dbReference>
<dbReference type="GeneTree" id="ENSGT00940000160087"/>
<dbReference type="HOGENOM" id="CLU_081609_0_0_1"/>
<dbReference type="InParanoid" id="O54769"/>
<dbReference type="OrthoDB" id="2253at9989"/>
<dbReference type="PhylomeDB" id="O54769"/>
<dbReference type="TreeFam" id="TF317805"/>
<dbReference type="Reactome" id="R-RNO-109704">
    <property type="pathway name" value="PI3K Cascade"/>
</dbReference>
<dbReference type="Reactome" id="R-RNO-1257604">
    <property type="pathway name" value="PIP3 activates AKT signaling"/>
</dbReference>
<dbReference type="Reactome" id="R-RNO-190322">
    <property type="pathway name" value="FGFR4 ligand binding and activation"/>
</dbReference>
<dbReference type="Reactome" id="R-RNO-190372">
    <property type="pathway name" value="FGFR3c ligand binding and activation"/>
</dbReference>
<dbReference type="Reactome" id="R-RNO-190375">
    <property type="pathway name" value="FGFR2c ligand binding and activation"/>
</dbReference>
<dbReference type="Reactome" id="R-RNO-5654221">
    <property type="pathway name" value="Phospholipase C-mediated cascade, FGFR2"/>
</dbReference>
<dbReference type="Reactome" id="R-RNO-5654227">
    <property type="pathway name" value="Phospholipase C-mediated cascade, FGFR3"/>
</dbReference>
<dbReference type="Reactome" id="R-RNO-5654228">
    <property type="pathway name" value="Phospholipase C-mediated cascade, FGFR4"/>
</dbReference>
<dbReference type="Reactome" id="R-RNO-5654695">
    <property type="pathway name" value="PI-3K cascade:FGFR2"/>
</dbReference>
<dbReference type="Reactome" id="R-RNO-5654699">
    <property type="pathway name" value="SHC-mediated cascade:FGFR2"/>
</dbReference>
<dbReference type="Reactome" id="R-RNO-5654700">
    <property type="pathway name" value="FRS-mediated FGFR2 signaling"/>
</dbReference>
<dbReference type="Reactome" id="R-RNO-5654704">
    <property type="pathway name" value="SHC-mediated cascade:FGFR3"/>
</dbReference>
<dbReference type="Reactome" id="R-RNO-5654706">
    <property type="pathway name" value="FRS-mediated FGFR3 signaling"/>
</dbReference>
<dbReference type="Reactome" id="R-RNO-5654710">
    <property type="pathway name" value="PI-3K cascade:FGFR3"/>
</dbReference>
<dbReference type="Reactome" id="R-RNO-5654712">
    <property type="pathway name" value="FRS-mediated FGFR4 signaling"/>
</dbReference>
<dbReference type="Reactome" id="R-RNO-5654719">
    <property type="pathway name" value="SHC-mediated cascade:FGFR4"/>
</dbReference>
<dbReference type="Reactome" id="R-RNO-5654720">
    <property type="pathway name" value="PI-3K cascade:FGFR4"/>
</dbReference>
<dbReference type="Reactome" id="R-RNO-5654727">
    <property type="pathway name" value="Negative regulation of FGFR2 signaling"/>
</dbReference>
<dbReference type="Reactome" id="R-RNO-5654732">
    <property type="pathway name" value="Negative regulation of FGFR3 signaling"/>
</dbReference>
<dbReference type="Reactome" id="R-RNO-5654733">
    <property type="pathway name" value="Negative regulation of FGFR4 signaling"/>
</dbReference>
<dbReference type="Reactome" id="R-RNO-5673001">
    <property type="pathway name" value="RAF/MAP kinase cascade"/>
</dbReference>
<dbReference type="Reactome" id="R-RNO-6811558">
    <property type="pathway name" value="PI5P, PP2A and IER3 Regulate PI3K/AKT Signaling"/>
</dbReference>
<dbReference type="PRO" id="PR:O54769"/>
<dbReference type="Proteomes" id="UP000002494">
    <property type="component" value="Chromosome X"/>
</dbReference>
<dbReference type="Bgee" id="ENSRNOG00000061530">
    <property type="expression patterns" value="Expressed in heart and 9 other cell types or tissues"/>
</dbReference>
<dbReference type="GO" id="GO:0005737">
    <property type="term" value="C:cytoplasm"/>
    <property type="evidence" value="ECO:0000318"/>
    <property type="project" value="GO_Central"/>
</dbReference>
<dbReference type="GO" id="GO:0005615">
    <property type="term" value="C:extracellular space"/>
    <property type="evidence" value="ECO:0000318"/>
    <property type="project" value="GO_Central"/>
</dbReference>
<dbReference type="GO" id="GO:0005104">
    <property type="term" value="F:fibroblast growth factor receptor binding"/>
    <property type="evidence" value="ECO:0000316"/>
    <property type="project" value="MGI"/>
</dbReference>
<dbReference type="GO" id="GO:0008083">
    <property type="term" value="F:growth factor activity"/>
    <property type="evidence" value="ECO:0000318"/>
    <property type="project" value="GO_Central"/>
</dbReference>
<dbReference type="GO" id="GO:0008543">
    <property type="term" value="P:fibroblast growth factor receptor signaling pathway"/>
    <property type="evidence" value="ECO:0000316"/>
    <property type="project" value="MGI"/>
</dbReference>
<dbReference type="GO" id="GO:0022008">
    <property type="term" value="P:neurogenesis"/>
    <property type="evidence" value="ECO:0000318"/>
    <property type="project" value="GO_Central"/>
</dbReference>
<dbReference type="GO" id="GO:0070349">
    <property type="term" value="P:positive regulation of brown fat cell proliferation"/>
    <property type="evidence" value="ECO:0000316"/>
    <property type="project" value="MGI"/>
</dbReference>
<dbReference type="GO" id="GO:0008284">
    <property type="term" value="P:positive regulation of cell population proliferation"/>
    <property type="evidence" value="ECO:0000318"/>
    <property type="project" value="GO_Central"/>
</dbReference>
<dbReference type="GO" id="GO:2000546">
    <property type="term" value="P:positive regulation of endothelial cell chemotaxis to fibroblast growth factor"/>
    <property type="evidence" value="ECO:0000266"/>
    <property type="project" value="RGD"/>
</dbReference>
<dbReference type="GO" id="GO:0043410">
    <property type="term" value="P:positive regulation of MAPK cascade"/>
    <property type="evidence" value="ECO:0000318"/>
    <property type="project" value="GO_Central"/>
</dbReference>
<dbReference type="GO" id="GO:0030334">
    <property type="term" value="P:regulation of cell migration"/>
    <property type="evidence" value="ECO:0000318"/>
    <property type="project" value="GO_Central"/>
</dbReference>
<dbReference type="CDD" id="cd23326">
    <property type="entry name" value="beta-trefoil_FGF16"/>
    <property type="match status" value="1"/>
</dbReference>
<dbReference type="FunFam" id="2.80.10.50:FF:000004">
    <property type="entry name" value="Fibroblast growth factor"/>
    <property type="match status" value="1"/>
</dbReference>
<dbReference type="Gene3D" id="2.80.10.50">
    <property type="match status" value="1"/>
</dbReference>
<dbReference type="InterPro" id="IPR002209">
    <property type="entry name" value="Fibroblast_GF_fam"/>
</dbReference>
<dbReference type="InterPro" id="IPR008996">
    <property type="entry name" value="IL1/FGF"/>
</dbReference>
<dbReference type="PANTHER" id="PTHR11486">
    <property type="entry name" value="FIBROBLAST GROWTH FACTOR"/>
    <property type="match status" value="1"/>
</dbReference>
<dbReference type="Pfam" id="PF00167">
    <property type="entry name" value="FGF"/>
    <property type="match status" value="1"/>
</dbReference>
<dbReference type="PRINTS" id="PR00263">
    <property type="entry name" value="HBGFFGF"/>
</dbReference>
<dbReference type="PRINTS" id="PR00262">
    <property type="entry name" value="IL1HBGF"/>
</dbReference>
<dbReference type="SMART" id="SM00442">
    <property type="entry name" value="FGF"/>
    <property type="match status" value="1"/>
</dbReference>
<dbReference type="SUPFAM" id="SSF50353">
    <property type="entry name" value="Cytokine"/>
    <property type="match status" value="1"/>
</dbReference>
<dbReference type="PROSITE" id="PS00247">
    <property type="entry name" value="HBGF_FGF"/>
    <property type="match status" value="1"/>
</dbReference>
<reference key="1">
    <citation type="journal article" date="1998" name="Biochem. Biophys. Res. Commun.">
        <title>Structure and expression of a novel member, FGF-16, on the fibroblast growth factor family.</title>
        <authorList>
            <person name="Miyake A."/>
            <person name="Konishi M."/>
            <person name="Martin F.H."/>
            <person name="Hernday N.A."/>
            <person name="Ozaki K."/>
            <person name="Yamamoto S."/>
            <person name="Mikami T."/>
            <person name="Arakawa T."/>
            <person name="Itoh N."/>
        </authorList>
    </citation>
    <scope>NUCLEOTIDE SEQUENCE [MRNA]</scope>
    <scope>FUNCTION</scope>
    <scope>SUBCELLULAR LOCATION</scope>
    <scope>DEVELOPMENTAL STAGE</scope>
    <scope>TISSUE SPECIFICITY</scope>
    <source>
        <strain>Wistar</strain>
        <tissue>Heart</tissue>
    </source>
</reference>
<reference key="2">
    <citation type="journal article" date="2004" name="Genome Res.">
        <title>The status, quality, and expansion of the NIH full-length cDNA project: the Mammalian Gene Collection (MGC).</title>
        <authorList>
            <consortium name="The MGC Project Team"/>
        </authorList>
    </citation>
    <scope>NUCLEOTIDE SEQUENCE [LARGE SCALE MRNA]</scope>
    <source>
        <tissue>Heart</tissue>
    </source>
</reference>